<name>SUBV_BACSU</name>
<protein>
    <recommendedName>
        <fullName evidence="9">Minor extracellular protease Vpr</fullName>
        <ecNumber evidence="5 6">3.4.21.-</ecNumber>
    </recommendedName>
</protein>
<feature type="signal peptide" evidence="1">
    <location>
        <begin position="1"/>
        <end position="28"/>
    </location>
</feature>
<feature type="propeptide" id="PRO_0000027189" evidence="3 6">
    <location>
        <begin position="29"/>
        <end position="160"/>
    </location>
</feature>
<feature type="chain" id="PRO_0000027190" description="Minor extracellular protease Vpr" evidence="10 11">
    <location>
        <begin position="161"/>
        <end position="806"/>
    </location>
</feature>
<feature type="domain" description="Inhibitor I9" evidence="1">
    <location>
        <begin position="57"/>
        <end position="142"/>
    </location>
</feature>
<feature type="domain" description="Peptidase S8" evidence="2">
    <location>
        <begin position="158"/>
        <end position="597"/>
    </location>
</feature>
<feature type="domain" description="PA" evidence="1">
    <location>
        <begin position="383"/>
        <end position="461"/>
    </location>
</feature>
<feature type="active site" description="Charge relay system" evidence="2">
    <location>
        <position position="189"/>
    </location>
</feature>
<feature type="active site" description="Charge relay system" evidence="2">
    <location>
        <position position="233"/>
    </location>
</feature>
<feature type="active site" description="Charge relay system" evidence="2">
    <location>
        <position position="534"/>
    </location>
</feature>
<sequence length="806" mass="85608">MKKGIIRFLLVSFVLFFALSTGITGVQAAPASSKTSADLEKAEVFGDIDMTTSKKTTVIVELKEKSLAEAKEAGESQSKSKLKTARTKAKNKAIKAVKNGKVNREYEQVFSGFSMKLPANEIPKLLAVKDVKAVYPNVTYKTDNMKDKDVTISEDAVSPQMDDSAPYIGANDAWDLGYTGKGIKVAIIDTGVEYNHPDLKKNFGQYKGYDFVDNDYDPKETPTGDPRGEATDHGTHVAGTVAANGTIKGVAPDATLLAYRVLGPGGSGTTENVIAGVERAVQDGADVMNLSLGNSLNNPDWATSTALDWAMSEGVVAVTSNGNSGPNGWTVGSPGTSREAISVGATQLPLNEYAVTFGSYSSAKVMGYNKEDDVKALNNKEVELVEAGIGEAKDFEGKDLTGKVAVVKRGSIAFVDKADNAKKAGAIGMVVYNNLSGEIEANVPGMSVPTIKLSLEDGEKLVSALKAGETKTTFKLTVSKALGEQVADFSSRGPVMDTWMIKPDISAPGVNIVSTIPTHDPDHPYGYGSKQGTSMASPHIAGAVAVIKQAKPKWSVEQIKAAIMNTAVTLKDSDGEVYPHNAQGAGSARIMNAIKADSLVSPGSYSYGTFLKENGNETKNETFTIENQSSIRKSYTLEYSFNGSGISTSGTSRVVIPAHQTGKATAKVKVNTKKTKAGTYEGTVIVREGGKTVAKVPTLLIVKEPDYPRVTSVSVSEGSVQGTYQIETYLPAGAEELAFLVYDSNLDFAGQAGIYKNQDKGYQYFDWDGTINGGTKLPAGEYYLLAYAANKGKSSQVLTEEPFTVE</sequence>
<gene>
    <name evidence="8" type="primary">vpr</name>
    <name type="ordered locus">BSU38090</name>
    <name type="ORF">ipa-45r</name>
</gene>
<organism>
    <name type="scientific">Bacillus subtilis (strain 168)</name>
    <dbReference type="NCBI Taxonomy" id="224308"/>
    <lineage>
        <taxon>Bacteria</taxon>
        <taxon>Bacillati</taxon>
        <taxon>Bacillota</taxon>
        <taxon>Bacilli</taxon>
        <taxon>Bacillales</taxon>
        <taxon>Bacillaceae</taxon>
        <taxon>Bacillus</taxon>
    </lineage>
</organism>
<proteinExistence type="evidence at protein level"/>
<accession>P29141</accession>
<keyword id="KW-0134">Cell wall</keyword>
<keyword id="KW-0903">Direct protein sequencing</keyword>
<keyword id="KW-0378">Hydrolase</keyword>
<keyword id="KW-0645">Protease</keyword>
<keyword id="KW-1185">Reference proteome</keyword>
<keyword id="KW-0964">Secreted</keyword>
<keyword id="KW-0720">Serine protease</keyword>
<keyword id="KW-0732">Signal</keyword>
<keyword id="KW-0865">Zymogen</keyword>
<dbReference type="EC" id="3.4.21.-" evidence="5 6"/>
<dbReference type="EMBL" id="M76590">
    <property type="protein sequence ID" value="AAA22881.1"/>
    <property type="molecule type" value="Genomic_DNA"/>
</dbReference>
<dbReference type="EMBL" id="X73124">
    <property type="protein sequence ID" value="CAA51601.1"/>
    <property type="molecule type" value="Genomic_DNA"/>
</dbReference>
<dbReference type="EMBL" id="AL009126">
    <property type="protein sequence ID" value="CAB15835.1"/>
    <property type="molecule type" value="Genomic_DNA"/>
</dbReference>
<dbReference type="PIR" id="A41341">
    <property type="entry name" value="A41341"/>
</dbReference>
<dbReference type="RefSeq" id="NP_391688.1">
    <property type="nucleotide sequence ID" value="NC_000964.3"/>
</dbReference>
<dbReference type="RefSeq" id="WP_003227419.1">
    <property type="nucleotide sequence ID" value="NZ_OZ025638.1"/>
</dbReference>
<dbReference type="SMR" id="P29141"/>
<dbReference type="FunCoup" id="P29141">
    <property type="interactions" value="196"/>
</dbReference>
<dbReference type="STRING" id="224308.BSU38090"/>
<dbReference type="MEROPS" id="S08.114"/>
<dbReference type="PaxDb" id="224308-BSU38090"/>
<dbReference type="EnsemblBacteria" id="CAB15835">
    <property type="protein sequence ID" value="CAB15835"/>
    <property type="gene ID" value="BSU_38090"/>
</dbReference>
<dbReference type="GeneID" id="937291"/>
<dbReference type="KEGG" id="bsu:BSU38090"/>
<dbReference type="PATRIC" id="fig|224308.179.peg.4123"/>
<dbReference type="eggNOG" id="COG1404">
    <property type="taxonomic scope" value="Bacteria"/>
</dbReference>
<dbReference type="InParanoid" id="P29141"/>
<dbReference type="OrthoDB" id="9798386at2"/>
<dbReference type="PhylomeDB" id="P29141"/>
<dbReference type="BioCyc" id="BSUB:BSU38090-MONOMER"/>
<dbReference type="BRENDA" id="3.4.21.62">
    <property type="organism ID" value="658"/>
</dbReference>
<dbReference type="Proteomes" id="UP000001570">
    <property type="component" value="Chromosome"/>
</dbReference>
<dbReference type="GO" id="GO:0005576">
    <property type="term" value="C:extracellular region"/>
    <property type="evidence" value="ECO:0007669"/>
    <property type="project" value="UniProtKB-SubCell"/>
</dbReference>
<dbReference type="GO" id="GO:0004252">
    <property type="term" value="F:serine-type endopeptidase activity"/>
    <property type="evidence" value="ECO:0000318"/>
    <property type="project" value="GO_Central"/>
</dbReference>
<dbReference type="GO" id="GO:0006508">
    <property type="term" value="P:proteolysis"/>
    <property type="evidence" value="ECO:0007669"/>
    <property type="project" value="UniProtKB-KW"/>
</dbReference>
<dbReference type="CDD" id="cd02133">
    <property type="entry name" value="PA_C5a_like"/>
    <property type="match status" value="1"/>
</dbReference>
<dbReference type="CDD" id="cd07474">
    <property type="entry name" value="Peptidases_S8_subtilisin_Vpr-like"/>
    <property type="match status" value="1"/>
</dbReference>
<dbReference type="Gene3D" id="2.60.40.4070">
    <property type="match status" value="1"/>
</dbReference>
<dbReference type="Gene3D" id="3.50.30.30">
    <property type="match status" value="1"/>
</dbReference>
<dbReference type="Gene3D" id="3.40.50.200">
    <property type="entry name" value="Peptidase S8/S53 domain"/>
    <property type="match status" value="1"/>
</dbReference>
<dbReference type="InterPro" id="IPR025965">
    <property type="entry name" value="FlgD/Vpr_Ig-like"/>
</dbReference>
<dbReference type="InterPro" id="IPR046450">
    <property type="entry name" value="PA_dom_sf"/>
</dbReference>
<dbReference type="InterPro" id="IPR003137">
    <property type="entry name" value="PA_domain"/>
</dbReference>
<dbReference type="InterPro" id="IPR000209">
    <property type="entry name" value="Peptidase_S8/S53_dom"/>
</dbReference>
<dbReference type="InterPro" id="IPR036852">
    <property type="entry name" value="Peptidase_S8/S53_dom_sf"/>
</dbReference>
<dbReference type="InterPro" id="IPR023827">
    <property type="entry name" value="Peptidase_S8_Asp-AS"/>
</dbReference>
<dbReference type="InterPro" id="IPR022398">
    <property type="entry name" value="Peptidase_S8_His-AS"/>
</dbReference>
<dbReference type="InterPro" id="IPR023828">
    <property type="entry name" value="Peptidase_S8_Ser-AS"/>
</dbReference>
<dbReference type="InterPro" id="IPR050131">
    <property type="entry name" value="Peptidase_S8_subtilisin-like"/>
</dbReference>
<dbReference type="InterPro" id="IPR015500">
    <property type="entry name" value="Peptidase_S8_subtilisin-rel"/>
</dbReference>
<dbReference type="InterPro" id="IPR034213">
    <property type="entry name" value="S8_Vpr-like"/>
</dbReference>
<dbReference type="InterPro" id="IPR010259">
    <property type="entry name" value="S8pro/Inhibitor_I9"/>
</dbReference>
<dbReference type="PANTHER" id="PTHR43806">
    <property type="entry name" value="PEPTIDASE S8"/>
    <property type="match status" value="1"/>
</dbReference>
<dbReference type="PANTHER" id="PTHR43806:SF65">
    <property type="entry name" value="SERINE PROTEASE APRX"/>
    <property type="match status" value="1"/>
</dbReference>
<dbReference type="Pfam" id="PF13860">
    <property type="entry name" value="FlgD_ig"/>
    <property type="match status" value="1"/>
</dbReference>
<dbReference type="Pfam" id="PF05922">
    <property type="entry name" value="Inhibitor_I9"/>
    <property type="match status" value="1"/>
</dbReference>
<dbReference type="Pfam" id="PF02225">
    <property type="entry name" value="PA"/>
    <property type="match status" value="1"/>
</dbReference>
<dbReference type="Pfam" id="PF00082">
    <property type="entry name" value="Peptidase_S8"/>
    <property type="match status" value="1"/>
</dbReference>
<dbReference type="PRINTS" id="PR00723">
    <property type="entry name" value="SUBTILISIN"/>
</dbReference>
<dbReference type="SUPFAM" id="SSF52025">
    <property type="entry name" value="PA domain"/>
    <property type="match status" value="1"/>
</dbReference>
<dbReference type="SUPFAM" id="SSF52743">
    <property type="entry name" value="Subtilisin-like"/>
    <property type="match status" value="1"/>
</dbReference>
<dbReference type="PROSITE" id="PS51892">
    <property type="entry name" value="SUBTILASE"/>
    <property type="match status" value="1"/>
</dbReference>
<dbReference type="PROSITE" id="PS00136">
    <property type="entry name" value="SUBTILASE_ASP"/>
    <property type="match status" value="1"/>
</dbReference>
<dbReference type="PROSITE" id="PS00137">
    <property type="entry name" value="SUBTILASE_HIS"/>
    <property type="match status" value="1"/>
</dbReference>
<dbReference type="PROSITE" id="PS00138">
    <property type="entry name" value="SUBTILASE_SER"/>
    <property type="match status" value="1"/>
</dbReference>
<reference key="1">
    <citation type="journal article" date="1991" name="J. Bacteriol.">
        <title>Cloning and characterization of the gene for an additional extracellular serine protease of Bacillus subtilis.</title>
        <authorList>
            <person name="Sloma A."/>
            <person name="Rufo G.A. Jr."/>
            <person name="Theriault K.A."/>
            <person name="Dwyer M."/>
            <person name="Wilson S.W."/>
            <person name="Pero J."/>
        </authorList>
    </citation>
    <scope>NUCLEOTIDE SEQUENCE [GENOMIC DNA]</scope>
    <scope>PROTEIN SEQUENCE OF 161-195</scope>
    <scope>FUNCTION AS A PROTEASE</scope>
    <scope>ACTIVITY REGULATION</scope>
    <scope>SUBCELLULAR LOCATION</scope>
</reference>
<reference key="2">
    <citation type="journal article" date="1993" name="Mol. Microbiol.">
        <title>Bacillus subtilis genome project: cloning and sequencing of the 97 kb region from 325 degrees to 333 degrees.</title>
        <authorList>
            <person name="Glaser P."/>
            <person name="Kunst F."/>
            <person name="Arnaud M."/>
            <person name="Coudart M.P."/>
            <person name="Gonzales W."/>
            <person name="Hullo M.-F."/>
            <person name="Ionescu M."/>
            <person name="Lubochinsky B."/>
            <person name="Marcelino L."/>
            <person name="Moszer I."/>
            <person name="Presecan E."/>
            <person name="Santana M."/>
            <person name="Schneider E."/>
            <person name="Schweizer J."/>
            <person name="Vertes A."/>
            <person name="Rapoport G."/>
            <person name="Danchin A."/>
        </authorList>
    </citation>
    <scope>NUCLEOTIDE SEQUENCE [GENOMIC DNA]</scope>
    <source>
        <strain>168</strain>
    </source>
</reference>
<reference key="3">
    <citation type="journal article" date="1997" name="Nature">
        <title>The complete genome sequence of the Gram-positive bacterium Bacillus subtilis.</title>
        <authorList>
            <person name="Kunst F."/>
            <person name="Ogasawara N."/>
            <person name="Moszer I."/>
            <person name="Albertini A.M."/>
            <person name="Alloni G."/>
            <person name="Azevedo V."/>
            <person name="Bertero M.G."/>
            <person name="Bessieres P."/>
            <person name="Bolotin A."/>
            <person name="Borchert S."/>
            <person name="Borriss R."/>
            <person name="Boursier L."/>
            <person name="Brans A."/>
            <person name="Braun M."/>
            <person name="Brignell S.C."/>
            <person name="Bron S."/>
            <person name="Brouillet S."/>
            <person name="Bruschi C.V."/>
            <person name="Caldwell B."/>
            <person name="Capuano V."/>
            <person name="Carter N.M."/>
            <person name="Choi S.-K."/>
            <person name="Codani J.-J."/>
            <person name="Connerton I.F."/>
            <person name="Cummings N.J."/>
            <person name="Daniel R.A."/>
            <person name="Denizot F."/>
            <person name="Devine K.M."/>
            <person name="Duesterhoeft A."/>
            <person name="Ehrlich S.D."/>
            <person name="Emmerson P.T."/>
            <person name="Entian K.-D."/>
            <person name="Errington J."/>
            <person name="Fabret C."/>
            <person name="Ferrari E."/>
            <person name="Foulger D."/>
            <person name="Fritz C."/>
            <person name="Fujita M."/>
            <person name="Fujita Y."/>
            <person name="Fuma S."/>
            <person name="Galizzi A."/>
            <person name="Galleron N."/>
            <person name="Ghim S.-Y."/>
            <person name="Glaser P."/>
            <person name="Goffeau A."/>
            <person name="Golightly E.J."/>
            <person name="Grandi G."/>
            <person name="Guiseppi G."/>
            <person name="Guy B.J."/>
            <person name="Haga K."/>
            <person name="Haiech J."/>
            <person name="Harwood C.R."/>
            <person name="Henaut A."/>
            <person name="Hilbert H."/>
            <person name="Holsappel S."/>
            <person name="Hosono S."/>
            <person name="Hullo M.-F."/>
            <person name="Itaya M."/>
            <person name="Jones L.-M."/>
            <person name="Joris B."/>
            <person name="Karamata D."/>
            <person name="Kasahara Y."/>
            <person name="Klaerr-Blanchard M."/>
            <person name="Klein C."/>
            <person name="Kobayashi Y."/>
            <person name="Koetter P."/>
            <person name="Koningstein G."/>
            <person name="Krogh S."/>
            <person name="Kumano M."/>
            <person name="Kurita K."/>
            <person name="Lapidus A."/>
            <person name="Lardinois S."/>
            <person name="Lauber J."/>
            <person name="Lazarevic V."/>
            <person name="Lee S.-M."/>
            <person name="Levine A."/>
            <person name="Liu H."/>
            <person name="Masuda S."/>
            <person name="Mauel C."/>
            <person name="Medigue C."/>
            <person name="Medina N."/>
            <person name="Mellado R.P."/>
            <person name="Mizuno M."/>
            <person name="Moestl D."/>
            <person name="Nakai S."/>
            <person name="Noback M."/>
            <person name="Noone D."/>
            <person name="O'Reilly M."/>
            <person name="Ogawa K."/>
            <person name="Ogiwara A."/>
            <person name="Oudega B."/>
            <person name="Park S.-H."/>
            <person name="Parro V."/>
            <person name="Pohl T.M."/>
            <person name="Portetelle D."/>
            <person name="Porwollik S."/>
            <person name="Prescott A.M."/>
            <person name="Presecan E."/>
            <person name="Pujic P."/>
            <person name="Purnelle B."/>
            <person name="Rapoport G."/>
            <person name="Rey M."/>
            <person name="Reynolds S."/>
            <person name="Rieger M."/>
            <person name="Rivolta C."/>
            <person name="Rocha E."/>
            <person name="Roche B."/>
            <person name="Rose M."/>
            <person name="Sadaie Y."/>
            <person name="Sato T."/>
            <person name="Scanlan E."/>
            <person name="Schleich S."/>
            <person name="Schroeter R."/>
            <person name="Scoffone F."/>
            <person name="Sekiguchi J."/>
            <person name="Sekowska A."/>
            <person name="Seror S.J."/>
            <person name="Serror P."/>
            <person name="Shin B.-S."/>
            <person name="Soldo B."/>
            <person name="Sorokin A."/>
            <person name="Tacconi E."/>
            <person name="Takagi T."/>
            <person name="Takahashi H."/>
            <person name="Takemaru K."/>
            <person name="Takeuchi M."/>
            <person name="Tamakoshi A."/>
            <person name="Tanaka T."/>
            <person name="Terpstra P."/>
            <person name="Tognoni A."/>
            <person name="Tosato V."/>
            <person name="Uchiyama S."/>
            <person name="Vandenbol M."/>
            <person name="Vannier F."/>
            <person name="Vassarotti A."/>
            <person name="Viari A."/>
            <person name="Wambutt R."/>
            <person name="Wedler E."/>
            <person name="Wedler H."/>
            <person name="Weitzenegger T."/>
            <person name="Winters P."/>
            <person name="Wipat A."/>
            <person name="Yamamoto H."/>
            <person name="Yamane K."/>
            <person name="Yasumoto K."/>
            <person name="Yata K."/>
            <person name="Yoshida K."/>
            <person name="Yoshikawa H.-F."/>
            <person name="Zumstein E."/>
            <person name="Yoshikawa H."/>
            <person name="Danchin A."/>
        </authorList>
    </citation>
    <scope>NUCLEOTIDE SEQUENCE [LARGE SCALE GENOMIC DNA]</scope>
    <source>
        <strain>168</strain>
    </source>
</reference>
<reference key="4">
    <citation type="journal article" date="2000" name="Microbiology">
        <title>Proteome analysis of Bacillus subtilis extracellular proteins: a two-dimensional protein electrophoretic study.</title>
        <authorList>
            <person name="Hirose I."/>
            <person name="Sano K."/>
            <person name="Shioda I."/>
            <person name="Kumano M."/>
            <person name="Nakamura K."/>
            <person name="Yamane K."/>
        </authorList>
    </citation>
    <scope>PROTEIN SEQUENCE OF 161-170</scope>
    <source>
        <strain>168</strain>
    </source>
</reference>
<reference key="5">
    <citation type="journal article" date="2005" name="Protein Expr. Purif.">
        <title>Confirmation of Vpr as a fibrinolytic enzyme present in extracellular proteins of Bacillus subtilis.</title>
        <authorList>
            <person name="Kho C.W."/>
            <person name="Park S.G."/>
            <person name="Cho S."/>
            <person name="Lee D.H."/>
            <person name="Myung P.K."/>
            <person name="Park B.C."/>
        </authorList>
    </citation>
    <scope>FUNCTION</scope>
    <scope>IDENTIFICATION BY MASS SPECTROMETRY</scope>
    <scope>AUTOPROTEOLYTIC PROCESSING</scope>
    <source>
        <strain>168</strain>
    </source>
</reference>
<reference key="6">
    <citation type="journal article" date="2007" name="Mol. Microbiol.">
        <title>Identification of subtilisin, Epr and Vpr as enzymes that produce CSF, an extracellular signalling peptide of Bacillus subtilis.</title>
        <authorList>
            <person name="Lanigan-Gerdes S."/>
            <person name="Dooley A.N."/>
            <person name="Faull K.F."/>
            <person name="Lazazzera B.A."/>
        </authorList>
    </citation>
    <scope>FUNCTION</scope>
    <scope>SUBCELLULAR LOCATION</scope>
    <scope>DISRUPTION PHENOTYPE</scope>
</reference>
<reference key="7">
    <citation type="journal article" date="2015" name="J. Bacteriol.">
        <title>CodY regulates expression of the Bacillus subtilis extracellular proteases Vpr and Mpr.</title>
        <authorList>
            <person name="Barbieri G."/>
            <person name="Voigt B."/>
            <person name="Albrecht D."/>
            <person name="Hecker M."/>
            <person name="Albertini A.M."/>
            <person name="Sonenshein A.L."/>
            <person name="Ferrari E."/>
            <person name="Belitsky B.R."/>
        </authorList>
    </citation>
    <scope>TRANSCRIPTIONAL REGULATION</scope>
    <source>
        <strain>168 / SMY</strain>
    </source>
</reference>
<comment type="function">
    <text evidence="4 5 6">Serine protease (PubMed:17666034, PubMed:1938892). Involved in the production of the competence and sporulation stimulating factor CSF (PubMed:17666034). Is directly involved in the processing of pro-CSF to CSF (PubMed:17666034). Can also cleave pro-PhrA to PhrA, but cannot cleave pro-PhrE (PubMed:17666034). Shows fibrinolytic activity in vitro (PubMed:15596354). Not essential for growth or sporulation (PubMed:1938892).</text>
</comment>
<comment type="activity regulation">
    <text evidence="6">Activity is inhibited by phenylmethylsulfonyl fluoride (PMSF), but not by EDTA.</text>
</comment>
<comment type="subcellular location">
    <subcellularLocation>
        <location evidence="6">Secreted</location>
    </subcellularLocation>
    <subcellularLocation>
        <location evidence="5">Secreted</location>
        <location evidence="5">Cell wall</location>
    </subcellularLocation>
</comment>
<comment type="induction">
    <text evidence="7">Expression is negatively controlled by CodY, which binds to the regulatory regions of vpr, in the vicinity of its transcription start point (PubMed:25666135). Expression is sigma H-dependent (PubMed:25666135).</text>
</comment>
<comment type="PTM">
    <text evidence="4 6">Probably undergoes C-terminal processing or proteolysis (PubMed:1938892). Auto-processed to form active enzymes of several different molecular weights (PubMed:15596354).</text>
</comment>
<comment type="disruption phenotype">
    <text evidence="5">Mutant lacking this gene does not show significant decrease in CSF production, but the triple deletion mutant aprE-epr-vpr is defective in the cleavage event to release mature CSF.</text>
</comment>
<comment type="similarity">
    <text evidence="9">Belongs to the peptidase S8 family.</text>
</comment>
<evidence type="ECO:0000255" key="1"/>
<evidence type="ECO:0000255" key="2">
    <source>
        <dbReference type="PROSITE-ProRule" id="PRU01240"/>
    </source>
</evidence>
<evidence type="ECO:0000269" key="3">
    <source>
    </source>
</evidence>
<evidence type="ECO:0000269" key="4">
    <source>
    </source>
</evidence>
<evidence type="ECO:0000269" key="5">
    <source>
    </source>
</evidence>
<evidence type="ECO:0000269" key="6">
    <source>
    </source>
</evidence>
<evidence type="ECO:0000269" key="7">
    <source>
    </source>
</evidence>
<evidence type="ECO:0000303" key="8">
    <source>
    </source>
</evidence>
<evidence type="ECO:0000305" key="9"/>
<evidence type="ECO:0000305" key="10">
    <source>
    </source>
</evidence>
<evidence type="ECO:0000305" key="11">
    <source>
    </source>
</evidence>